<dbReference type="EC" id="3.4.11.1" evidence="1"/>
<dbReference type="EC" id="3.4.11.10" evidence="1"/>
<dbReference type="EMBL" id="CP001138">
    <property type="protein sequence ID" value="ACH50781.1"/>
    <property type="molecule type" value="Genomic_DNA"/>
</dbReference>
<dbReference type="RefSeq" id="WP_000397158.1">
    <property type="nucleotide sequence ID" value="NC_011149.1"/>
</dbReference>
<dbReference type="SMR" id="B5F465"/>
<dbReference type="MEROPS" id="M17.003"/>
<dbReference type="KEGG" id="sea:SeAg_B4763"/>
<dbReference type="HOGENOM" id="CLU_013734_2_2_6"/>
<dbReference type="Proteomes" id="UP000008819">
    <property type="component" value="Chromosome"/>
</dbReference>
<dbReference type="GO" id="GO:0005737">
    <property type="term" value="C:cytoplasm"/>
    <property type="evidence" value="ECO:0007669"/>
    <property type="project" value="UniProtKB-SubCell"/>
</dbReference>
<dbReference type="GO" id="GO:0030145">
    <property type="term" value="F:manganese ion binding"/>
    <property type="evidence" value="ECO:0007669"/>
    <property type="project" value="UniProtKB-UniRule"/>
</dbReference>
<dbReference type="GO" id="GO:0070006">
    <property type="term" value="F:metalloaminopeptidase activity"/>
    <property type="evidence" value="ECO:0007669"/>
    <property type="project" value="InterPro"/>
</dbReference>
<dbReference type="GO" id="GO:0006508">
    <property type="term" value="P:proteolysis"/>
    <property type="evidence" value="ECO:0007669"/>
    <property type="project" value="UniProtKB-KW"/>
</dbReference>
<dbReference type="CDD" id="cd00433">
    <property type="entry name" value="Peptidase_M17"/>
    <property type="match status" value="1"/>
</dbReference>
<dbReference type="FunFam" id="3.40.220.10:FF:000001">
    <property type="entry name" value="Probable cytosol aminopeptidase"/>
    <property type="match status" value="1"/>
</dbReference>
<dbReference type="FunFam" id="3.40.630.10:FF:000004">
    <property type="entry name" value="Probable cytosol aminopeptidase"/>
    <property type="match status" value="1"/>
</dbReference>
<dbReference type="Gene3D" id="3.40.220.10">
    <property type="entry name" value="Leucine Aminopeptidase, subunit E, domain 1"/>
    <property type="match status" value="1"/>
</dbReference>
<dbReference type="Gene3D" id="3.40.630.10">
    <property type="entry name" value="Zn peptidases"/>
    <property type="match status" value="1"/>
</dbReference>
<dbReference type="HAMAP" id="MF_00181">
    <property type="entry name" value="Cytosol_peptidase_M17"/>
    <property type="match status" value="1"/>
</dbReference>
<dbReference type="InterPro" id="IPR011356">
    <property type="entry name" value="Leucine_aapep/pepB"/>
</dbReference>
<dbReference type="InterPro" id="IPR043472">
    <property type="entry name" value="Macro_dom-like"/>
</dbReference>
<dbReference type="InterPro" id="IPR000819">
    <property type="entry name" value="Peptidase_M17_C"/>
</dbReference>
<dbReference type="InterPro" id="IPR023042">
    <property type="entry name" value="Peptidase_M17_leu_NH2_pept"/>
</dbReference>
<dbReference type="InterPro" id="IPR008283">
    <property type="entry name" value="Peptidase_M17_N"/>
</dbReference>
<dbReference type="NCBIfam" id="NF002072">
    <property type="entry name" value="PRK00913.1-1"/>
    <property type="match status" value="1"/>
</dbReference>
<dbReference type="NCBIfam" id="NF002073">
    <property type="entry name" value="PRK00913.1-2"/>
    <property type="match status" value="1"/>
</dbReference>
<dbReference type="NCBIfam" id="NF002074">
    <property type="entry name" value="PRK00913.1-4"/>
    <property type="match status" value="1"/>
</dbReference>
<dbReference type="PANTHER" id="PTHR11963:SF23">
    <property type="entry name" value="CYTOSOL AMINOPEPTIDASE"/>
    <property type="match status" value="1"/>
</dbReference>
<dbReference type="PANTHER" id="PTHR11963">
    <property type="entry name" value="LEUCINE AMINOPEPTIDASE-RELATED"/>
    <property type="match status" value="1"/>
</dbReference>
<dbReference type="Pfam" id="PF00883">
    <property type="entry name" value="Peptidase_M17"/>
    <property type="match status" value="1"/>
</dbReference>
<dbReference type="Pfam" id="PF02789">
    <property type="entry name" value="Peptidase_M17_N"/>
    <property type="match status" value="1"/>
</dbReference>
<dbReference type="PRINTS" id="PR00481">
    <property type="entry name" value="LAMNOPPTDASE"/>
</dbReference>
<dbReference type="SUPFAM" id="SSF52949">
    <property type="entry name" value="Macro domain-like"/>
    <property type="match status" value="1"/>
</dbReference>
<dbReference type="SUPFAM" id="SSF53187">
    <property type="entry name" value="Zn-dependent exopeptidases"/>
    <property type="match status" value="1"/>
</dbReference>
<dbReference type="PROSITE" id="PS00631">
    <property type="entry name" value="CYTOSOL_AP"/>
    <property type="match status" value="1"/>
</dbReference>
<name>AMPA_SALA4</name>
<gene>
    <name evidence="1" type="primary">pepA</name>
    <name type="ordered locus">SeAg_B4763</name>
</gene>
<sequence>MEFSVKSGSPEKQRSACIVVGVFEPRRLSPIAEQLDKISDGYISALLRRGELEGKPGQTLLLHHVPNVLSERILLIGCGKERELDERQYKQVIQKTINTLNDTGSMEAVCFLTELHVKGRNNYWKVRQAVETAKETLYSFDQLKTNKSEPRRPLRKMVFNVPTRRELTSGERAIQHGLAIAAGIKAAKDLGNMPPNICNAAYLASQARQLADSYSKNVITRVIGEQQMRELGMNAYLAVGHGSQNESLMSVIEYKGNPSEDARPIVLVGKGLTFDSGGISIKPSEGMDEMKYDMCGAAAVYGVMRMVAELQLPINVIGVLAGCENMPGGRAYRPGDVLTTMSGQTVEVLNTDAEGRLVLCDVLTYVERFEPEAVIDVATLTGACVIALGHHITGLMSNHNPLAHELIGASEQAGDRAWRLPLGDEFQEQLESNFADMANIGGRPGGAITAGCFLSRFTRKYNWAHLDIAGTAWRSGKAKGATGRPVALLSQFLLNRAGFNGEE</sequence>
<reference key="1">
    <citation type="journal article" date="2011" name="J. Bacteriol.">
        <title>Comparative genomics of 28 Salmonella enterica isolates: evidence for CRISPR-mediated adaptive sublineage evolution.</title>
        <authorList>
            <person name="Fricke W.F."/>
            <person name="Mammel M.K."/>
            <person name="McDermott P.F."/>
            <person name="Tartera C."/>
            <person name="White D.G."/>
            <person name="Leclerc J.E."/>
            <person name="Ravel J."/>
            <person name="Cebula T.A."/>
        </authorList>
    </citation>
    <scope>NUCLEOTIDE SEQUENCE [LARGE SCALE GENOMIC DNA]</scope>
    <source>
        <strain>SL483</strain>
    </source>
</reference>
<keyword id="KW-0031">Aminopeptidase</keyword>
<keyword id="KW-0963">Cytoplasm</keyword>
<keyword id="KW-0378">Hydrolase</keyword>
<keyword id="KW-0464">Manganese</keyword>
<keyword id="KW-0479">Metal-binding</keyword>
<keyword id="KW-0645">Protease</keyword>
<proteinExistence type="inferred from homology"/>
<organism>
    <name type="scientific">Salmonella agona (strain SL483)</name>
    <dbReference type="NCBI Taxonomy" id="454166"/>
    <lineage>
        <taxon>Bacteria</taxon>
        <taxon>Pseudomonadati</taxon>
        <taxon>Pseudomonadota</taxon>
        <taxon>Gammaproteobacteria</taxon>
        <taxon>Enterobacterales</taxon>
        <taxon>Enterobacteriaceae</taxon>
        <taxon>Salmonella</taxon>
    </lineage>
</organism>
<feature type="chain" id="PRO_1000098343" description="Probable cytosol aminopeptidase">
    <location>
        <begin position="1"/>
        <end position="503"/>
    </location>
</feature>
<feature type="active site" evidence="1">
    <location>
        <position position="282"/>
    </location>
</feature>
<feature type="active site" evidence="1">
    <location>
        <position position="356"/>
    </location>
</feature>
<feature type="binding site" evidence="1">
    <location>
        <position position="270"/>
    </location>
    <ligand>
        <name>Mn(2+)</name>
        <dbReference type="ChEBI" id="CHEBI:29035"/>
        <label>2</label>
    </ligand>
</feature>
<feature type="binding site" evidence="1">
    <location>
        <position position="275"/>
    </location>
    <ligand>
        <name>Mn(2+)</name>
        <dbReference type="ChEBI" id="CHEBI:29035"/>
        <label>1</label>
    </ligand>
</feature>
<feature type="binding site" evidence="1">
    <location>
        <position position="275"/>
    </location>
    <ligand>
        <name>Mn(2+)</name>
        <dbReference type="ChEBI" id="CHEBI:29035"/>
        <label>2</label>
    </ligand>
</feature>
<feature type="binding site" evidence="1">
    <location>
        <position position="293"/>
    </location>
    <ligand>
        <name>Mn(2+)</name>
        <dbReference type="ChEBI" id="CHEBI:29035"/>
        <label>2</label>
    </ligand>
</feature>
<feature type="binding site" evidence="1">
    <location>
        <position position="352"/>
    </location>
    <ligand>
        <name>Mn(2+)</name>
        <dbReference type="ChEBI" id="CHEBI:29035"/>
        <label>1</label>
    </ligand>
</feature>
<feature type="binding site" evidence="1">
    <location>
        <position position="354"/>
    </location>
    <ligand>
        <name>Mn(2+)</name>
        <dbReference type="ChEBI" id="CHEBI:29035"/>
        <label>1</label>
    </ligand>
</feature>
<feature type="binding site" evidence="1">
    <location>
        <position position="354"/>
    </location>
    <ligand>
        <name>Mn(2+)</name>
        <dbReference type="ChEBI" id="CHEBI:29035"/>
        <label>2</label>
    </ligand>
</feature>
<accession>B5F465</accession>
<comment type="function">
    <text evidence="1">Presumably involved in the processing and regular turnover of intracellular proteins. Catalyzes the removal of unsubstituted N-terminal amino acids from various peptides.</text>
</comment>
<comment type="catalytic activity">
    <reaction evidence="1">
        <text>Release of an N-terminal amino acid, Xaa-|-Yaa-, in which Xaa is preferably Leu, but may be other amino acids including Pro although not Arg or Lys, and Yaa may be Pro. Amino acid amides and methyl esters are also readily hydrolyzed, but rates on arylamides are exceedingly low.</text>
        <dbReference type="EC" id="3.4.11.1"/>
    </reaction>
</comment>
<comment type="catalytic activity">
    <reaction evidence="1">
        <text>Release of an N-terminal amino acid, preferentially leucine, but not glutamic or aspartic acids.</text>
        <dbReference type="EC" id="3.4.11.10"/>
    </reaction>
</comment>
<comment type="cofactor">
    <cofactor evidence="1">
        <name>Mn(2+)</name>
        <dbReference type="ChEBI" id="CHEBI:29035"/>
    </cofactor>
    <text evidence="1">Binds 2 manganese ions per subunit.</text>
</comment>
<comment type="subcellular location">
    <subcellularLocation>
        <location evidence="1">Cytoplasm</location>
    </subcellularLocation>
</comment>
<comment type="similarity">
    <text evidence="1">Belongs to the peptidase M17 family.</text>
</comment>
<protein>
    <recommendedName>
        <fullName evidence="1">Probable cytosol aminopeptidase</fullName>
        <ecNumber evidence="1">3.4.11.1</ecNumber>
    </recommendedName>
    <alternativeName>
        <fullName evidence="1">Leucine aminopeptidase</fullName>
        <shortName evidence="1">LAP</shortName>
        <ecNumber evidence="1">3.4.11.10</ecNumber>
    </alternativeName>
    <alternativeName>
        <fullName evidence="1">Leucyl aminopeptidase</fullName>
    </alternativeName>
</protein>
<evidence type="ECO:0000255" key="1">
    <source>
        <dbReference type="HAMAP-Rule" id="MF_00181"/>
    </source>
</evidence>